<evidence type="ECO:0000255" key="1">
    <source>
        <dbReference type="HAMAP-Rule" id="MF_00291"/>
    </source>
</evidence>
<evidence type="ECO:0000256" key="2">
    <source>
        <dbReference type="SAM" id="MobiDB-lite"/>
    </source>
</evidence>
<evidence type="ECO:0000305" key="3"/>
<keyword id="KW-1185">Reference proteome</keyword>
<keyword id="KW-0687">Ribonucleoprotein</keyword>
<keyword id="KW-0689">Ribosomal protein</keyword>
<gene>
    <name evidence="1" type="primary">rps2</name>
    <name type="ordered locus">NP_2848A</name>
</gene>
<feature type="chain" id="PRO_0000352075" description="Small ribosomal subunit protein uS2">
    <location>
        <begin position="1"/>
        <end position="277"/>
    </location>
</feature>
<feature type="region of interest" description="Disordered" evidence="2">
    <location>
        <begin position="1"/>
        <end position="78"/>
    </location>
</feature>
<reference key="1">
    <citation type="journal article" date="2005" name="Genome Res.">
        <title>Living with two extremes: conclusions from the genome sequence of Natronomonas pharaonis.</title>
        <authorList>
            <person name="Falb M."/>
            <person name="Pfeiffer F."/>
            <person name="Palm P."/>
            <person name="Rodewald K."/>
            <person name="Hickmann V."/>
            <person name="Tittor J."/>
            <person name="Oesterhelt D."/>
        </authorList>
    </citation>
    <scope>NUCLEOTIDE SEQUENCE [LARGE SCALE GENOMIC DNA]</scope>
    <source>
        <strain>ATCC 35678 / DSM 2160 / CIP 103997 / JCM 8858 / NBRC 14720 / NCIMB 2260 / Gabara</strain>
    </source>
</reference>
<proteinExistence type="inferred from homology"/>
<organism>
    <name type="scientific">Natronomonas pharaonis (strain ATCC 35678 / DSM 2160 / CIP 103997 / JCM 8858 / NBRC 14720 / NCIMB 2260 / Gabara)</name>
    <name type="common">Halobacterium pharaonis</name>
    <dbReference type="NCBI Taxonomy" id="348780"/>
    <lineage>
        <taxon>Archaea</taxon>
        <taxon>Methanobacteriati</taxon>
        <taxon>Methanobacteriota</taxon>
        <taxon>Stenosarchaea group</taxon>
        <taxon>Halobacteria</taxon>
        <taxon>Halobacteriales</taxon>
        <taxon>Haloarculaceae</taxon>
        <taxon>Natronomonas</taxon>
    </lineage>
</organism>
<sequence length="277" mass="30268">MSENDEGTDAAELDEELDELEDELEEDFEEPAAAADEADPTADEPPAEEAADEAADEAEADEPETDAEPADEEPVLDENVMPDDEADLLIPVEDYLAAGVHIGTQQKTKSMDRFIHRVRTDGLYVLDVSQTDQRIRTAASFLSNYQPEQILVASSRQYGRFPAEKFADAVGARARTGRFIPGTLTNPDYDGYIEPDVVVVTDPIGDSQAVKEAITVGIPVIAMCDSNNTTSNVDLVVPTNNKGRKALSVIYWLLANETLDRRGAEPAYALEDFETEP</sequence>
<comment type="similarity">
    <text evidence="1">Belongs to the universal ribosomal protein uS2 family.</text>
</comment>
<protein>
    <recommendedName>
        <fullName evidence="1">Small ribosomal subunit protein uS2</fullName>
    </recommendedName>
    <alternativeName>
        <fullName evidence="3">30S ribosomal protein S2</fullName>
    </alternativeName>
</protein>
<accession>Q3IQS9</accession>
<dbReference type="EMBL" id="CR936257">
    <property type="protein sequence ID" value="CAI49515.1"/>
    <property type="molecule type" value="Genomic_DNA"/>
</dbReference>
<dbReference type="RefSeq" id="WP_011323140.1">
    <property type="nucleotide sequence ID" value="NC_007426.1"/>
</dbReference>
<dbReference type="SMR" id="Q3IQS9"/>
<dbReference type="STRING" id="348780.NP_2848A"/>
<dbReference type="EnsemblBacteria" id="CAI49515">
    <property type="protein sequence ID" value="CAI49515"/>
    <property type="gene ID" value="NP_2848A"/>
</dbReference>
<dbReference type="GeneID" id="3703175"/>
<dbReference type="KEGG" id="nph:NP_2848A"/>
<dbReference type="eggNOG" id="arCOG04245">
    <property type="taxonomic scope" value="Archaea"/>
</dbReference>
<dbReference type="HOGENOM" id="CLU_058171_3_0_2"/>
<dbReference type="OrthoDB" id="371797at2157"/>
<dbReference type="Proteomes" id="UP000002698">
    <property type="component" value="Chromosome"/>
</dbReference>
<dbReference type="GO" id="GO:0015935">
    <property type="term" value="C:small ribosomal subunit"/>
    <property type="evidence" value="ECO:0007669"/>
    <property type="project" value="InterPro"/>
</dbReference>
<dbReference type="GO" id="GO:0003735">
    <property type="term" value="F:structural constituent of ribosome"/>
    <property type="evidence" value="ECO:0007669"/>
    <property type="project" value="InterPro"/>
</dbReference>
<dbReference type="GO" id="GO:0006412">
    <property type="term" value="P:translation"/>
    <property type="evidence" value="ECO:0007669"/>
    <property type="project" value="UniProtKB-UniRule"/>
</dbReference>
<dbReference type="CDD" id="cd01425">
    <property type="entry name" value="RPS2"/>
    <property type="match status" value="1"/>
</dbReference>
<dbReference type="FunFam" id="3.40.50.10490:FF:000030">
    <property type="entry name" value="30S ribosomal protein S2"/>
    <property type="match status" value="1"/>
</dbReference>
<dbReference type="Gene3D" id="3.40.50.10490">
    <property type="entry name" value="Glucose-6-phosphate isomerase like protein, domain 1"/>
    <property type="match status" value="1"/>
</dbReference>
<dbReference type="HAMAP" id="MF_00291_A">
    <property type="entry name" value="Ribosomal_uS2_A"/>
    <property type="match status" value="1"/>
</dbReference>
<dbReference type="InterPro" id="IPR001865">
    <property type="entry name" value="Ribosomal_uS2"/>
</dbReference>
<dbReference type="InterPro" id="IPR023454">
    <property type="entry name" value="Ribosomal_uS2_arc"/>
</dbReference>
<dbReference type="InterPro" id="IPR018130">
    <property type="entry name" value="Ribosomal_uS2_CS"/>
</dbReference>
<dbReference type="InterPro" id="IPR005707">
    <property type="entry name" value="Ribosomal_uS2_euk/arc"/>
</dbReference>
<dbReference type="InterPro" id="IPR023591">
    <property type="entry name" value="Ribosomal_uS2_flav_dom_sf"/>
</dbReference>
<dbReference type="NCBIfam" id="TIGR01012">
    <property type="entry name" value="uS2_euk_arch"/>
    <property type="match status" value="1"/>
</dbReference>
<dbReference type="PANTHER" id="PTHR11489">
    <property type="entry name" value="40S RIBOSOMAL PROTEIN SA"/>
    <property type="match status" value="1"/>
</dbReference>
<dbReference type="Pfam" id="PF00318">
    <property type="entry name" value="Ribosomal_S2"/>
    <property type="match status" value="2"/>
</dbReference>
<dbReference type="PRINTS" id="PR00395">
    <property type="entry name" value="RIBOSOMALS2"/>
</dbReference>
<dbReference type="SUPFAM" id="SSF52313">
    <property type="entry name" value="Ribosomal protein S2"/>
    <property type="match status" value="1"/>
</dbReference>
<dbReference type="PROSITE" id="PS00962">
    <property type="entry name" value="RIBOSOMAL_S2_1"/>
    <property type="match status" value="1"/>
</dbReference>
<dbReference type="PROSITE" id="PS00963">
    <property type="entry name" value="RIBOSOMAL_S2_2"/>
    <property type="match status" value="1"/>
</dbReference>
<name>RS2_NATPD</name>